<comment type="function">
    <text evidence="1">One of the primary rRNA binding proteins, it binds directly to 16S rRNA where it nucleates assembly of the head domain of the 30S subunit. Is located at the subunit interface close to the decoding center, probably blocks exit of the E-site tRNA.</text>
</comment>
<comment type="subunit">
    <text evidence="1">Part of the 30S ribosomal subunit. Contacts proteins S9 and S11.</text>
</comment>
<comment type="similarity">
    <text evidence="1">Belongs to the universal ribosomal protein uS7 family.</text>
</comment>
<proteinExistence type="inferred from homology"/>
<keyword id="KW-1185">Reference proteome</keyword>
<keyword id="KW-0687">Ribonucleoprotein</keyword>
<keyword id="KW-0689">Ribosomal protein</keyword>
<keyword id="KW-0694">RNA-binding</keyword>
<keyword id="KW-0699">rRNA-binding</keyword>
<keyword id="KW-0820">tRNA-binding</keyword>
<accession>Q089Q8</accession>
<name>RS7_SHEFN</name>
<protein>
    <recommendedName>
        <fullName evidence="1">Small ribosomal subunit protein uS7</fullName>
    </recommendedName>
    <alternativeName>
        <fullName evidence="2">30S ribosomal protein S7</fullName>
    </alternativeName>
</protein>
<feature type="chain" id="PRO_1000014284" description="Small ribosomal subunit protein uS7">
    <location>
        <begin position="1"/>
        <end position="156"/>
    </location>
</feature>
<organism>
    <name type="scientific">Shewanella frigidimarina (strain NCIMB 400)</name>
    <dbReference type="NCBI Taxonomy" id="318167"/>
    <lineage>
        <taxon>Bacteria</taxon>
        <taxon>Pseudomonadati</taxon>
        <taxon>Pseudomonadota</taxon>
        <taxon>Gammaproteobacteria</taxon>
        <taxon>Alteromonadales</taxon>
        <taxon>Shewanellaceae</taxon>
        <taxon>Shewanella</taxon>
    </lineage>
</organism>
<gene>
    <name evidence="1" type="primary">rpsG</name>
    <name type="ordered locus">Sfri_0144</name>
</gene>
<dbReference type="EMBL" id="CP000447">
    <property type="protein sequence ID" value="ABI70007.1"/>
    <property type="molecule type" value="Genomic_DNA"/>
</dbReference>
<dbReference type="RefSeq" id="WP_011635636.1">
    <property type="nucleotide sequence ID" value="NC_008345.1"/>
</dbReference>
<dbReference type="SMR" id="Q089Q8"/>
<dbReference type="STRING" id="318167.Sfri_0144"/>
<dbReference type="GeneID" id="90568404"/>
<dbReference type="KEGG" id="sfr:Sfri_0144"/>
<dbReference type="eggNOG" id="COG0049">
    <property type="taxonomic scope" value="Bacteria"/>
</dbReference>
<dbReference type="HOGENOM" id="CLU_072226_1_1_6"/>
<dbReference type="OrthoDB" id="9807653at2"/>
<dbReference type="Proteomes" id="UP000000684">
    <property type="component" value="Chromosome"/>
</dbReference>
<dbReference type="GO" id="GO:0015935">
    <property type="term" value="C:small ribosomal subunit"/>
    <property type="evidence" value="ECO:0007669"/>
    <property type="project" value="InterPro"/>
</dbReference>
<dbReference type="GO" id="GO:0019843">
    <property type="term" value="F:rRNA binding"/>
    <property type="evidence" value="ECO:0007669"/>
    <property type="project" value="UniProtKB-UniRule"/>
</dbReference>
<dbReference type="GO" id="GO:0003735">
    <property type="term" value="F:structural constituent of ribosome"/>
    <property type="evidence" value="ECO:0007669"/>
    <property type="project" value="InterPro"/>
</dbReference>
<dbReference type="GO" id="GO:0000049">
    <property type="term" value="F:tRNA binding"/>
    <property type="evidence" value="ECO:0007669"/>
    <property type="project" value="UniProtKB-UniRule"/>
</dbReference>
<dbReference type="GO" id="GO:0006412">
    <property type="term" value="P:translation"/>
    <property type="evidence" value="ECO:0007669"/>
    <property type="project" value="UniProtKB-UniRule"/>
</dbReference>
<dbReference type="CDD" id="cd14869">
    <property type="entry name" value="uS7_Bacteria"/>
    <property type="match status" value="1"/>
</dbReference>
<dbReference type="FunFam" id="1.10.455.10:FF:000001">
    <property type="entry name" value="30S ribosomal protein S7"/>
    <property type="match status" value="1"/>
</dbReference>
<dbReference type="Gene3D" id="1.10.455.10">
    <property type="entry name" value="Ribosomal protein S7 domain"/>
    <property type="match status" value="1"/>
</dbReference>
<dbReference type="HAMAP" id="MF_00480_B">
    <property type="entry name" value="Ribosomal_uS7_B"/>
    <property type="match status" value="1"/>
</dbReference>
<dbReference type="InterPro" id="IPR000235">
    <property type="entry name" value="Ribosomal_uS7"/>
</dbReference>
<dbReference type="InterPro" id="IPR005717">
    <property type="entry name" value="Ribosomal_uS7_bac/org-type"/>
</dbReference>
<dbReference type="InterPro" id="IPR020606">
    <property type="entry name" value="Ribosomal_uS7_CS"/>
</dbReference>
<dbReference type="InterPro" id="IPR023798">
    <property type="entry name" value="Ribosomal_uS7_dom"/>
</dbReference>
<dbReference type="InterPro" id="IPR036823">
    <property type="entry name" value="Ribosomal_uS7_dom_sf"/>
</dbReference>
<dbReference type="NCBIfam" id="TIGR01029">
    <property type="entry name" value="rpsG_bact"/>
    <property type="match status" value="1"/>
</dbReference>
<dbReference type="PANTHER" id="PTHR11205">
    <property type="entry name" value="RIBOSOMAL PROTEIN S7"/>
    <property type="match status" value="1"/>
</dbReference>
<dbReference type="Pfam" id="PF00177">
    <property type="entry name" value="Ribosomal_S7"/>
    <property type="match status" value="1"/>
</dbReference>
<dbReference type="PIRSF" id="PIRSF002122">
    <property type="entry name" value="RPS7p_RPS7a_RPS5e_RPS7o"/>
    <property type="match status" value="1"/>
</dbReference>
<dbReference type="SUPFAM" id="SSF47973">
    <property type="entry name" value="Ribosomal protein S7"/>
    <property type="match status" value="1"/>
</dbReference>
<dbReference type="PROSITE" id="PS00052">
    <property type="entry name" value="RIBOSOMAL_S7"/>
    <property type="match status" value="1"/>
</dbReference>
<reference key="1">
    <citation type="submission" date="2006-08" db="EMBL/GenBank/DDBJ databases">
        <title>Complete sequence of Shewanella frigidimarina NCIMB 400.</title>
        <authorList>
            <consortium name="US DOE Joint Genome Institute"/>
            <person name="Copeland A."/>
            <person name="Lucas S."/>
            <person name="Lapidus A."/>
            <person name="Barry K."/>
            <person name="Detter J.C."/>
            <person name="Glavina del Rio T."/>
            <person name="Hammon N."/>
            <person name="Israni S."/>
            <person name="Dalin E."/>
            <person name="Tice H."/>
            <person name="Pitluck S."/>
            <person name="Fredrickson J.K."/>
            <person name="Kolker E."/>
            <person name="McCuel L.A."/>
            <person name="DiChristina T."/>
            <person name="Nealson K.H."/>
            <person name="Newman D."/>
            <person name="Tiedje J.M."/>
            <person name="Zhou J."/>
            <person name="Romine M.F."/>
            <person name="Culley D.E."/>
            <person name="Serres M."/>
            <person name="Chertkov O."/>
            <person name="Brettin T."/>
            <person name="Bruce D."/>
            <person name="Han C."/>
            <person name="Tapia R."/>
            <person name="Gilna P."/>
            <person name="Schmutz J."/>
            <person name="Larimer F."/>
            <person name="Land M."/>
            <person name="Hauser L."/>
            <person name="Kyrpides N."/>
            <person name="Mikhailova N."/>
            <person name="Richardson P."/>
        </authorList>
    </citation>
    <scope>NUCLEOTIDE SEQUENCE [LARGE SCALE GENOMIC DNA]</scope>
    <source>
        <strain>NCIMB 400</strain>
    </source>
</reference>
<evidence type="ECO:0000255" key="1">
    <source>
        <dbReference type="HAMAP-Rule" id="MF_00480"/>
    </source>
</evidence>
<evidence type="ECO:0000305" key="2"/>
<sequence>MPRRRVVGQRKILPDPKFHSELLAKFINVIMQDGKKSTAEKIIYKALDVVAEKKSENHLSILEAALDNVRPSVEVKSRRVGGSTYQVPCEVRPVRRNALAMRWLVEAARKRGEKSMALRLAGEMLDASENKGTAVKKREDVHRMAEANKAFAHYRW</sequence>